<protein>
    <recommendedName>
        <fullName evidence="1">Valine--tRNA ligase</fullName>
        <ecNumber evidence="1">6.1.1.9</ecNumber>
    </recommendedName>
    <alternativeName>
        <fullName evidence="1">Valyl-tRNA synthetase</fullName>
        <shortName evidence="1">ValRS</shortName>
    </alternativeName>
</protein>
<sequence length="918" mass="104941">MELAKSFDPKEIETRWYSTWETAGYFSPTDHKGADPYCIMLPPPNVTGTLHMGHAFQHTLMDALIRYHRMLGDNTLWQPGTDHAGIATQIVVERQLDQEGKDRRQMGREAFLERVWQWKEESGSTITRQMRRMGASCDWSRERFTMDETLSRAVTEVFVRLYREGLIYRGKRLVNWDPVLQTAVSDLEVVSVEEQGSLWHILYPFEQLEGGSEHQGLVVATTRPETMLGDMAVAVHPEDERYRHLIGRHLRLPLSERTIPIIADSYVDPAFGTGCVKITPAHDFNDYQVGLRHKLIPLNVFTLDGKINDNAPAEFQGLDRFDARKKVIADLQAQGLLVETRPHKLMVPRGDRTNTVIEPMLTDQWYLAMEGLAKQGLAVVASGKVRFVPENWTHVYNQWLENIQDWCISRQLWWGHRIPAWYDEDGNVTVAHDLEEARKLSGKEILRQDDDVLDTWFSSALWPFSTLGWPEQTPELKTFLPGSVLVTGFDIIFFWVARMVMMSLHFTGEVPFREVYITGLIRDAEGQKMSKSKGNVLDPLDLIDGVSLTELIRKRTTGLMNPKQAESIEKTTRKQFPQGIPAFGTDALRFTFASLASHGRDIKFDLQRCEGYRNFCNKLWNATRFVLMNCEGKDTGLDETLPLNFSQADKWIVGRLQQAEQGVVQAFDEYRFDLAAREMYEFVWDEYCDWYVELAKVQLSSADEAHQRATRRTLVRVLEAALRLAHPIIPFITEELWQAVAPLAGKTGTSIMHQPYPQADPARMDEHAAANVQLLKEIVNACRTLRGEMKLSPAERVPLLIEGDPSRLADFSPYLLALAKLSEVTILPDRLPDTDAPVAITGEFRLMLKIEVDVAAERERLNKEMQRLTLEIGKARTKLDNPDFLQRAPEKVVLQEKERLATFSATLEKLDQQLHKLG</sequence>
<dbReference type="EC" id="6.1.1.9" evidence="1"/>
<dbReference type="EMBL" id="AL954747">
    <property type="protein sequence ID" value="CAD84355.1"/>
    <property type="molecule type" value="Genomic_DNA"/>
</dbReference>
<dbReference type="RefSeq" id="WP_011111079.1">
    <property type="nucleotide sequence ID" value="NC_004757.1"/>
</dbReference>
<dbReference type="SMR" id="Q82X51"/>
<dbReference type="STRING" id="228410.NE0444"/>
<dbReference type="GeneID" id="87103653"/>
<dbReference type="KEGG" id="neu:NE0444"/>
<dbReference type="eggNOG" id="COG0525">
    <property type="taxonomic scope" value="Bacteria"/>
</dbReference>
<dbReference type="HOGENOM" id="CLU_001493_0_2_4"/>
<dbReference type="OrthoDB" id="9810365at2"/>
<dbReference type="PhylomeDB" id="Q82X51"/>
<dbReference type="Proteomes" id="UP000001416">
    <property type="component" value="Chromosome"/>
</dbReference>
<dbReference type="GO" id="GO:0005829">
    <property type="term" value="C:cytosol"/>
    <property type="evidence" value="ECO:0007669"/>
    <property type="project" value="TreeGrafter"/>
</dbReference>
<dbReference type="GO" id="GO:0002161">
    <property type="term" value="F:aminoacyl-tRNA deacylase activity"/>
    <property type="evidence" value="ECO:0007669"/>
    <property type="project" value="InterPro"/>
</dbReference>
<dbReference type="GO" id="GO:0005524">
    <property type="term" value="F:ATP binding"/>
    <property type="evidence" value="ECO:0007669"/>
    <property type="project" value="UniProtKB-UniRule"/>
</dbReference>
<dbReference type="GO" id="GO:0004832">
    <property type="term" value="F:valine-tRNA ligase activity"/>
    <property type="evidence" value="ECO:0007669"/>
    <property type="project" value="UniProtKB-UniRule"/>
</dbReference>
<dbReference type="GO" id="GO:0006438">
    <property type="term" value="P:valyl-tRNA aminoacylation"/>
    <property type="evidence" value="ECO:0007669"/>
    <property type="project" value="UniProtKB-UniRule"/>
</dbReference>
<dbReference type="CDD" id="cd07962">
    <property type="entry name" value="Anticodon_Ia_Val"/>
    <property type="match status" value="1"/>
</dbReference>
<dbReference type="CDD" id="cd00817">
    <property type="entry name" value="ValRS_core"/>
    <property type="match status" value="1"/>
</dbReference>
<dbReference type="FunFam" id="1.10.287.380:FF:000001">
    <property type="entry name" value="Valine--tRNA ligase"/>
    <property type="match status" value="1"/>
</dbReference>
<dbReference type="FunFam" id="3.40.50.620:FF:000032">
    <property type="entry name" value="Valine--tRNA ligase"/>
    <property type="match status" value="1"/>
</dbReference>
<dbReference type="FunFam" id="1.10.730.10:FF:000009">
    <property type="entry name" value="Valine--tRNA ligase, mitochondrial"/>
    <property type="match status" value="1"/>
</dbReference>
<dbReference type="FunFam" id="3.40.50.620:FF:000078">
    <property type="entry name" value="Valine--tRNA ligase, mitochondrial"/>
    <property type="match status" value="1"/>
</dbReference>
<dbReference type="FunFam" id="3.90.740.10:FF:000005">
    <property type="entry name" value="Valine--tRNA ligase, mitochondrial"/>
    <property type="match status" value="1"/>
</dbReference>
<dbReference type="Gene3D" id="3.40.50.620">
    <property type="entry name" value="HUPs"/>
    <property type="match status" value="2"/>
</dbReference>
<dbReference type="Gene3D" id="1.10.730.10">
    <property type="entry name" value="Isoleucyl-tRNA Synthetase, Domain 1"/>
    <property type="match status" value="1"/>
</dbReference>
<dbReference type="Gene3D" id="1.10.287.380">
    <property type="entry name" value="Valyl-tRNA synthetase, C-terminal domain"/>
    <property type="match status" value="1"/>
</dbReference>
<dbReference type="Gene3D" id="3.90.740.10">
    <property type="entry name" value="Valyl/Leucyl/Isoleucyl-tRNA synthetase, editing domain"/>
    <property type="match status" value="1"/>
</dbReference>
<dbReference type="HAMAP" id="MF_02004">
    <property type="entry name" value="Val_tRNA_synth_type1"/>
    <property type="match status" value="1"/>
</dbReference>
<dbReference type="InterPro" id="IPR001412">
    <property type="entry name" value="aa-tRNA-synth_I_CS"/>
</dbReference>
<dbReference type="InterPro" id="IPR002300">
    <property type="entry name" value="aa-tRNA-synth_Ia"/>
</dbReference>
<dbReference type="InterPro" id="IPR033705">
    <property type="entry name" value="Anticodon_Ia_Val"/>
</dbReference>
<dbReference type="InterPro" id="IPR013155">
    <property type="entry name" value="M/V/L/I-tRNA-synth_anticd-bd"/>
</dbReference>
<dbReference type="InterPro" id="IPR014729">
    <property type="entry name" value="Rossmann-like_a/b/a_fold"/>
</dbReference>
<dbReference type="InterPro" id="IPR010978">
    <property type="entry name" value="tRNA-bd_arm"/>
</dbReference>
<dbReference type="InterPro" id="IPR009080">
    <property type="entry name" value="tRNAsynth_Ia_anticodon-bd"/>
</dbReference>
<dbReference type="InterPro" id="IPR037118">
    <property type="entry name" value="Val-tRNA_synth_C_sf"/>
</dbReference>
<dbReference type="InterPro" id="IPR019499">
    <property type="entry name" value="Val-tRNA_synth_tRNA-bd"/>
</dbReference>
<dbReference type="InterPro" id="IPR009008">
    <property type="entry name" value="Val/Leu/Ile-tRNA-synth_edit"/>
</dbReference>
<dbReference type="InterPro" id="IPR002303">
    <property type="entry name" value="Valyl-tRNA_ligase"/>
</dbReference>
<dbReference type="NCBIfam" id="NF004349">
    <property type="entry name" value="PRK05729.1"/>
    <property type="match status" value="1"/>
</dbReference>
<dbReference type="NCBIfam" id="TIGR00422">
    <property type="entry name" value="valS"/>
    <property type="match status" value="1"/>
</dbReference>
<dbReference type="PANTHER" id="PTHR11946:SF93">
    <property type="entry name" value="VALINE--TRNA LIGASE, CHLOROPLASTIC_MITOCHONDRIAL 2"/>
    <property type="match status" value="1"/>
</dbReference>
<dbReference type="PANTHER" id="PTHR11946">
    <property type="entry name" value="VALYL-TRNA SYNTHETASES"/>
    <property type="match status" value="1"/>
</dbReference>
<dbReference type="Pfam" id="PF08264">
    <property type="entry name" value="Anticodon_1"/>
    <property type="match status" value="1"/>
</dbReference>
<dbReference type="Pfam" id="PF00133">
    <property type="entry name" value="tRNA-synt_1"/>
    <property type="match status" value="1"/>
</dbReference>
<dbReference type="Pfam" id="PF10458">
    <property type="entry name" value="Val_tRNA-synt_C"/>
    <property type="match status" value="1"/>
</dbReference>
<dbReference type="PRINTS" id="PR00986">
    <property type="entry name" value="TRNASYNTHVAL"/>
</dbReference>
<dbReference type="SUPFAM" id="SSF47323">
    <property type="entry name" value="Anticodon-binding domain of a subclass of class I aminoacyl-tRNA synthetases"/>
    <property type="match status" value="1"/>
</dbReference>
<dbReference type="SUPFAM" id="SSF52374">
    <property type="entry name" value="Nucleotidylyl transferase"/>
    <property type="match status" value="1"/>
</dbReference>
<dbReference type="SUPFAM" id="SSF46589">
    <property type="entry name" value="tRNA-binding arm"/>
    <property type="match status" value="1"/>
</dbReference>
<dbReference type="SUPFAM" id="SSF50677">
    <property type="entry name" value="ValRS/IleRS/LeuRS editing domain"/>
    <property type="match status" value="1"/>
</dbReference>
<dbReference type="PROSITE" id="PS00178">
    <property type="entry name" value="AA_TRNA_LIGASE_I"/>
    <property type="match status" value="1"/>
</dbReference>
<evidence type="ECO:0000255" key="1">
    <source>
        <dbReference type="HAMAP-Rule" id="MF_02004"/>
    </source>
</evidence>
<gene>
    <name evidence="1" type="primary">valS</name>
    <name type="ordered locus">NE0444</name>
</gene>
<accession>Q82X51</accession>
<reference key="1">
    <citation type="journal article" date="2003" name="J. Bacteriol.">
        <title>Complete genome sequence of the ammonia-oxidizing bacterium and obligate chemolithoautotroph Nitrosomonas europaea.</title>
        <authorList>
            <person name="Chain P."/>
            <person name="Lamerdin J.E."/>
            <person name="Larimer F.W."/>
            <person name="Regala W."/>
            <person name="Lao V."/>
            <person name="Land M.L."/>
            <person name="Hauser L."/>
            <person name="Hooper A.B."/>
            <person name="Klotz M.G."/>
            <person name="Norton J."/>
            <person name="Sayavedra-Soto L.A."/>
            <person name="Arciero D.M."/>
            <person name="Hommes N.G."/>
            <person name="Whittaker M.M."/>
            <person name="Arp D.J."/>
        </authorList>
    </citation>
    <scope>NUCLEOTIDE SEQUENCE [LARGE SCALE GENOMIC DNA]</scope>
    <source>
        <strain>ATCC 19718 / CIP 103999 / KCTC 2705 / NBRC 14298</strain>
    </source>
</reference>
<feature type="chain" id="PRO_0000224519" description="Valine--tRNA ligase">
    <location>
        <begin position="1"/>
        <end position="918"/>
    </location>
</feature>
<feature type="coiled-coil region" evidence="1">
    <location>
        <begin position="851"/>
        <end position="918"/>
    </location>
</feature>
<feature type="short sequence motif" description="'HIGH' region">
    <location>
        <begin position="44"/>
        <end position="54"/>
    </location>
</feature>
<feature type="short sequence motif" description="'KMSKS' region">
    <location>
        <begin position="528"/>
        <end position="532"/>
    </location>
</feature>
<feature type="binding site" evidence="1">
    <location>
        <position position="531"/>
    </location>
    <ligand>
        <name>ATP</name>
        <dbReference type="ChEBI" id="CHEBI:30616"/>
    </ligand>
</feature>
<name>SYV_NITEU</name>
<keyword id="KW-0030">Aminoacyl-tRNA synthetase</keyword>
<keyword id="KW-0067">ATP-binding</keyword>
<keyword id="KW-0175">Coiled coil</keyword>
<keyword id="KW-0963">Cytoplasm</keyword>
<keyword id="KW-0436">Ligase</keyword>
<keyword id="KW-0547">Nucleotide-binding</keyword>
<keyword id="KW-0648">Protein biosynthesis</keyword>
<keyword id="KW-1185">Reference proteome</keyword>
<proteinExistence type="inferred from homology"/>
<comment type="function">
    <text evidence="1">Catalyzes the attachment of valine to tRNA(Val). As ValRS can inadvertently accommodate and process structurally similar amino acids such as threonine, to avoid such errors, it has a 'posttransfer' editing activity that hydrolyzes mischarged Thr-tRNA(Val) in a tRNA-dependent manner.</text>
</comment>
<comment type="catalytic activity">
    <reaction evidence="1">
        <text>tRNA(Val) + L-valine + ATP = L-valyl-tRNA(Val) + AMP + diphosphate</text>
        <dbReference type="Rhea" id="RHEA:10704"/>
        <dbReference type="Rhea" id="RHEA-COMP:9672"/>
        <dbReference type="Rhea" id="RHEA-COMP:9708"/>
        <dbReference type="ChEBI" id="CHEBI:30616"/>
        <dbReference type="ChEBI" id="CHEBI:33019"/>
        <dbReference type="ChEBI" id="CHEBI:57762"/>
        <dbReference type="ChEBI" id="CHEBI:78442"/>
        <dbReference type="ChEBI" id="CHEBI:78537"/>
        <dbReference type="ChEBI" id="CHEBI:456215"/>
        <dbReference type="EC" id="6.1.1.9"/>
    </reaction>
</comment>
<comment type="subunit">
    <text evidence="1">Monomer.</text>
</comment>
<comment type="subcellular location">
    <subcellularLocation>
        <location evidence="1">Cytoplasm</location>
    </subcellularLocation>
</comment>
<comment type="domain">
    <text evidence="1">ValRS has two distinct active sites: one for aminoacylation and one for editing. The misactivated threonine is translocated from the active site to the editing site.</text>
</comment>
<comment type="domain">
    <text evidence="1">The C-terminal coiled-coil domain is crucial for aminoacylation activity.</text>
</comment>
<comment type="similarity">
    <text evidence="1">Belongs to the class-I aminoacyl-tRNA synthetase family. ValS type 1 subfamily.</text>
</comment>
<organism>
    <name type="scientific">Nitrosomonas europaea (strain ATCC 19718 / CIP 103999 / KCTC 2705 / NBRC 14298)</name>
    <dbReference type="NCBI Taxonomy" id="228410"/>
    <lineage>
        <taxon>Bacteria</taxon>
        <taxon>Pseudomonadati</taxon>
        <taxon>Pseudomonadota</taxon>
        <taxon>Betaproteobacteria</taxon>
        <taxon>Nitrosomonadales</taxon>
        <taxon>Nitrosomonadaceae</taxon>
        <taxon>Nitrosomonas</taxon>
    </lineage>
</organism>